<organism>
    <name type="scientific">Human immunodeficiency virus type 1 group N (isolate YBF30)</name>
    <name type="common">HIV-1</name>
    <dbReference type="NCBI Taxonomy" id="388818"/>
    <lineage>
        <taxon>Viruses</taxon>
        <taxon>Riboviria</taxon>
        <taxon>Pararnavirae</taxon>
        <taxon>Artverviricota</taxon>
        <taxon>Revtraviricetes</taxon>
        <taxon>Ortervirales</taxon>
        <taxon>Retroviridae</taxon>
        <taxon>Orthoretrovirinae</taxon>
        <taxon>Lentivirus</taxon>
        <taxon>Human immunodeficiency virus type 1</taxon>
    </lineage>
</organism>
<dbReference type="EMBL" id="AJ006022">
    <property type="protein sequence ID" value="CAA06812.1"/>
    <property type="molecule type" value="Genomic_DNA"/>
</dbReference>
<dbReference type="SMR" id="O91082"/>
<dbReference type="Proteomes" id="UP000007420">
    <property type="component" value="Segment"/>
</dbReference>
<dbReference type="GO" id="GO:0043657">
    <property type="term" value="C:host cell"/>
    <property type="evidence" value="ECO:0007669"/>
    <property type="project" value="GOC"/>
</dbReference>
<dbReference type="GO" id="GO:0042025">
    <property type="term" value="C:host cell nucleus"/>
    <property type="evidence" value="ECO:0007669"/>
    <property type="project" value="UniProtKB-SubCell"/>
</dbReference>
<dbReference type="GO" id="GO:0043655">
    <property type="term" value="C:host extracellular space"/>
    <property type="evidence" value="ECO:0007669"/>
    <property type="project" value="UniProtKB-SubCell"/>
</dbReference>
<dbReference type="GO" id="GO:0044423">
    <property type="term" value="C:virion component"/>
    <property type="evidence" value="ECO:0007669"/>
    <property type="project" value="UniProtKB-UniRule"/>
</dbReference>
<dbReference type="GO" id="GO:0006351">
    <property type="term" value="P:DNA-templated transcription"/>
    <property type="evidence" value="ECO:0007669"/>
    <property type="project" value="UniProtKB-UniRule"/>
</dbReference>
<dbReference type="GO" id="GO:0034220">
    <property type="term" value="P:monoatomic ion transmembrane transport"/>
    <property type="evidence" value="ECO:0007669"/>
    <property type="project" value="UniProtKB-KW"/>
</dbReference>
<dbReference type="GO" id="GO:0051260">
    <property type="term" value="P:protein homooligomerization"/>
    <property type="evidence" value="ECO:0007669"/>
    <property type="project" value="UniProtKB-UniRule"/>
</dbReference>
<dbReference type="GO" id="GO:0006355">
    <property type="term" value="P:regulation of DNA-templated transcription"/>
    <property type="evidence" value="ECO:0007669"/>
    <property type="project" value="UniProtKB-UniRule"/>
</dbReference>
<dbReference type="GO" id="GO:0046718">
    <property type="term" value="P:symbiont entry into host cell"/>
    <property type="evidence" value="ECO:0007669"/>
    <property type="project" value="UniProtKB-KW"/>
</dbReference>
<dbReference type="GO" id="GO:0052151">
    <property type="term" value="P:symbiont-mediated activation of host apoptosis"/>
    <property type="evidence" value="ECO:0007669"/>
    <property type="project" value="UniProtKB-UniRule"/>
</dbReference>
<dbReference type="GO" id="GO:0039592">
    <property type="term" value="P:symbiont-mediated arrest of host cell cycle during G2/M transition"/>
    <property type="evidence" value="ECO:0007669"/>
    <property type="project" value="UniProtKB-UniRule"/>
</dbReference>
<dbReference type="GO" id="GO:0075732">
    <property type="term" value="P:viral penetration into host nucleus"/>
    <property type="evidence" value="ECO:0007669"/>
    <property type="project" value="UniProtKB-UniRule"/>
</dbReference>
<dbReference type="Gene3D" id="6.10.210.10">
    <property type="match status" value="1"/>
</dbReference>
<dbReference type="Gene3D" id="1.20.5.90">
    <property type="entry name" value="VpR/VpX protein, C-terminal domain"/>
    <property type="match status" value="1"/>
</dbReference>
<dbReference type="HAMAP" id="MF_04080">
    <property type="entry name" value="HIV_VPR"/>
    <property type="match status" value="1"/>
</dbReference>
<dbReference type="InterPro" id="IPR000012">
    <property type="entry name" value="RetroV_VpR/X"/>
</dbReference>
<dbReference type="Pfam" id="PF00522">
    <property type="entry name" value="VPR"/>
    <property type="match status" value="1"/>
</dbReference>
<dbReference type="PRINTS" id="PR00444">
    <property type="entry name" value="HIVVPRVPX"/>
</dbReference>
<sequence length="95" mass="11235">MERAPEDAGPQREPYNEWALELLEELKNEAVRHFPRIWLHGLGQHIYNTYGDTWEGVEAIIRILQQLLFIHYRIGCQHSRIGITPQRRRNGTSRS</sequence>
<keyword id="KW-0010">Activator</keyword>
<keyword id="KW-0014">AIDS</keyword>
<keyword id="KW-0053">Apoptosis</keyword>
<keyword id="KW-0131">Cell cycle</keyword>
<keyword id="KW-1079">Host G2/M cell cycle arrest by virus</keyword>
<keyword id="KW-1048">Host nucleus</keyword>
<keyword id="KW-0945">Host-virus interaction</keyword>
<keyword id="KW-0407">Ion channel</keyword>
<keyword id="KW-0406">Ion transport</keyword>
<keyword id="KW-1121">Modulation of host cell cycle by virus</keyword>
<keyword id="KW-0597">Phosphoprotein</keyword>
<keyword id="KW-1185">Reference proteome</keyword>
<keyword id="KW-0804">Transcription</keyword>
<keyword id="KW-0805">Transcription regulation</keyword>
<keyword id="KW-0813">Transport</keyword>
<keyword id="KW-1163">Viral penetration into host nucleus</keyword>
<keyword id="KW-0946">Virion</keyword>
<keyword id="KW-1160">Virus entry into host cell</keyword>
<evidence type="ECO:0000255" key="1">
    <source>
        <dbReference type="HAMAP-Rule" id="MF_04080"/>
    </source>
</evidence>
<comment type="function">
    <text evidence="1">During virus replication, may deplete host UNG protein, and incude G2-M cell cycle arrest. Acts by targeting specific host proteins for degradation by the 26S proteasome, through association with the cellular CUL4A-DDB1 E3 ligase complex by direct interaction with host VPRPB/DCAF-1. Cell cycle arrest reportedly occurs within hours of infection and is not blocked by antiviral agents, suggesting that it is initiated by the VPR carried into the virion. Additionally, VPR induces apoptosis in a cell cycle dependent manner suggesting that these two effects are mechanistically linked. Detected in the serum and cerebrospinal fluid of AIDS patient, VPR may also induce cell death to bystander cells.</text>
</comment>
<comment type="function">
    <text evidence="1">During virus entry, plays a role in the transport of the viral pre-integration (PIC) complex to the host nucleus. This function is crucial for viral infection of non-dividing macrophages. May act directly at the nuclear pore complex, by binding nucleoporins phenylalanine-glycine (FG)-repeat regions.</text>
</comment>
<comment type="subunit">
    <text evidence="1">Homooligomer, may form homodimer. Interacts with p6-gag region of the Pr55 Gag precursor protein through a (Leu-X-X)4 motif near the C-terminus of the P6gag protein. Interacts with host UNG. May interact with host RAD23A/HHR23A. Interacts with host VPRBP/DCAF1, leading to hijack the CUL4A-RBX1-DDB1-DCAF1/VPRBP complex, mediating ubiquitination of host proteins such as TERT and ZGPAT and arrest of the cell cycle in G2 phase.</text>
</comment>
<comment type="subcellular location">
    <subcellularLocation>
        <location evidence="1">Virion</location>
    </subcellularLocation>
    <subcellularLocation>
        <location evidence="1">Host nucleus</location>
    </subcellularLocation>
    <subcellularLocation>
        <location evidence="1">Host extracellular space</location>
    </subcellularLocation>
    <text evidence="1">Incorporation into virion is dependent on p6 GAG sequences. Lacks a canonical nuclear localization signal, thus import into nucleus may function independently of the human importin pathway. Detected in high quantity in the serum and cerebrospinal fluid of AIDS patient.</text>
</comment>
<comment type="PTM">
    <text evidence="1">Phosphorylated on several residues by host. These phosphorylations regulate VPR activity for the nuclear import of the HIV-1 pre-integration complex.</text>
</comment>
<comment type="miscellaneous">
    <text evidence="1">HIV-1 lineages are divided in three main groups, M (for Major), O (for Outlier), and N (for New, or Non-M, Non-O). The vast majority of strains found worldwide belong to the group M. Group O seems to be endemic to and largely confined to Cameroon and neighboring countries in West Central Africa, where these viruses represent a small minority of HIV-1 strains. The group N is represented by a limited number of isolates from Cameroonian persons. The group M is further subdivided in 9 clades or subtypes (A to D, F to H, J and K).</text>
</comment>
<comment type="similarity">
    <text evidence="1">Belongs to the HIV-1 VPR protein family.</text>
</comment>
<protein>
    <recommendedName>
        <fullName evidence="1">Protein Vpr</fullName>
    </recommendedName>
    <alternativeName>
        <fullName evidence="1">R ORF protein</fullName>
    </alternativeName>
    <alternativeName>
        <fullName evidence="1">Viral protein R</fullName>
    </alternativeName>
</protein>
<gene>
    <name evidence="1" type="primary">vpr</name>
</gene>
<name>VPR_HV1YF</name>
<proteinExistence type="inferred from homology"/>
<organismHost>
    <name type="scientific">Homo sapiens</name>
    <name type="common">Human</name>
    <dbReference type="NCBI Taxonomy" id="9606"/>
</organismHost>
<reference key="1">
    <citation type="journal article" date="1998" name="Nat. Med.">
        <title>Identification of a new human immunodeficiency virus type 1 distinct from group M and group O.</title>
        <authorList>
            <person name="Simon F."/>
            <person name="Mauclere P."/>
            <person name="Roques P."/>
            <person name="Loussert-Ajaka I."/>
            <person name="Muller-Trutwin M.C."/>
            <person name="Saragosti S."/>
            <person name="Georges-Courbot M.C."/>
            <person name="Barre-Sinoussi F."/>
            <person name="Brun-Vezinet F."/>
        </authorList>
    </citation>
    <scope>NUCLEOTIDE SEQUENCE [GENOMIC DNA]</scope>
</reference>
<feature type="chain" id="PRO_0000246768" description="Protein Vpr">
    <location>
        <begin position="1"/>
        <end position="95"/>
    </location>
</feature>
<feature type="region of interest" description="Homooligomerization" evidence="1">
    <location>
        <begin position="1"/>
        <end position="42"/>
    </location>
</feature>
<feature type="modified residue" description="Phosphoserine; by host" evidence="1">
    <location>
        <position position="79"/>
    </location>
</feature>
<feature type="modified residue" description="Phosphoserine; by host" evidence="1">
    <location>
        <position position="93"/>
    </location>
</feature>
<feature type="modified residue" description="Phosphoserine; by host" evidence="1">
    <location>
        <position position="95"/>
    </location>
</feature>
<accession>O91082</accession>